<proteinExistence type="evidence at protein level"/>
<sequence length="1149" mass="127769">MASASGAENSSVPPSPLPPPPPPQIHTSRTKLSHHHHNNNNNNNNNIDSTSKAIAQYTEDARLHAVFEQSGESGRSFDYSQSIRVTSESVPEQQITAYLLKIQRGGFIQPFGSMIAVDEPSFRILAYSDNARDMLGITPQSVPSLDDKNDAAFALGTDIRTLFTHSSAVLLEKAFSAREISLMNPIWIHSRTSGKPFYGILHRIDVGIVIDLEPARTEDPALSIAGAVQSQKLAVRAISQLQSLPGGDVKLLCDTVVESVRELTGYDRVMVYRFHEDEHGEVVAETKRPDLEPYIGLHYPATDIPQASRFLFKQNRVRMIVDCHASAVRVVQDEALVQPLCLVGSTLRAPHGCHAQYMANMGSTASLVMAVIINGNDEEGVGGRTSMRLWGLVVCHHTSARCIPFPLRYACEFLMQAFGLQLNMELQLAAQSLEKRVLRTQTLLCDMLLRDSPTGIVTQSPSIMDLVKCDGAALYYQGNYYPLGVTPTEAQIRDIIEWLLAFHRDSTGLSTDSLADAGYPGAASLGDAVCGMAVAYITEKDFLFWFRSHTAKEIKWGGAKHHPEDKDDGQRMHPRSSFKAFLEVVKSRSLPWENAEMDAIHSLQLILRDSFKDAEHSNSKAVLDPRMSELELQGVDELSSVAREMVRLIETATAPIFAVDVDGRINGWNAKVSELTGLPVEEAMGKSLVRDLVFKESEETVDKLLSRALKGEEDKNVEIKMRTFGPEHQNKAVFVVVNACSSKDYTNNVVGVCFVGQDVTGQKIVMDKFINIQGDYKAIVHNPNPLIPPIFASDDNTCCLEWNTAMEKLTGWSRADVIGKMLVGEVFGSCCQLKGSDSITKFMIVLHNALGGHDTDRFPFSFLDRYGKHVQAFLTANKRVNMDGQIIGAFCFLQIVSPELQQALKAQRQQEKNSFARMKELAYICQGVKNPLSGIRFTNSLLEATCLSNEQKQFLETSAACEKQMLKIIHDVDIESIEDGSLELEKGEFLLGNVINAVVSQVMLLLRERNLQLIRDIPEEIKTLAVYGDQLRIQQVLSDFLLNIVRYAPSPDGWVEIHVHPRIKQISDGLTLLHAEFRMVCPGEGLPPELIQNMFNNSGWGTQEGLGLSMSRKILKLMNGEVQYIREAQRCYFYVLLELPVTRRSSKKC</sequence>
<accession>I1MGE5</accession>
<gene>
    <name evidence="8" type="ORF">GLYMA_15G140000</name>
</gene>
<dbReference type="EMBL" id="CM000848">
    <property type="protein sequence ID" value="KRH11936.1"/>
    <property type="molecule type" value="Genomic_DNA"/>
</dbReference>
<dbReference type="RefSeq" id="XP_003546314.1">
    <property type="nucleotide sequence ID" value="XM_003546266.3"/>
</dbReference>
<dbReference type="PDB" id="6TL4">
    <property type="method" value="X-ray"/>
    <property type="resolution" value="2.90 A"/>
    <property type="chains" value="A=85-616"/>
</dbReference>
<dbReference type="PDBsum" id="6TL4"/>
<dbReference type="SMR" id="I1MGE5"/>
<dbReference type="FunCoup" id="I1MGE5">
    <property type="interactions" value="1499"/>
</dbReference>
<dbReference type="STRING" id="3847.I1MGE5"/>
<dbReference type="PaxDb" id="3847-GLYMA15G14980.1"/>
<dbReference type="EnsemblPlants" id="KRH11936">
    <property type="protein sequence ID" value="KRH11936"/>
    <property type="gene ID" value="GLYMA_15G140000"/>
</dbReference>
<dbReference type="Gramene" id="KRH11936">
    <property type="protein sequence ID" value="KRH11936"/>
    <property type="gene ID" value="GLYMA_15G140000"/>
</dbReference>
<dbReference type="KEGG" id="gmx:100794865"/>
<dbReference type="eggNOG" id="ENOG502QRNS">
    <property type="taxonomic scope" value="Eukaryota"/>
</dbReference>
<dbReference type="HOGENOM" id="CLU_010418_0_0_1"/>
<dbReference type="InParanoid" id="I1MGE5"/>
<dbReference type="OrthoDB" id="2015534at2759"/>
<dbReference type="Proteomes" id="UP000008827">
    <property type="component" value="Chromosome 15"/>
</dbReference>
<dbReference type="ExpressionAtlas" id="I1MGE5">
    <property type="expression patterns" value="baseline and differential"/>
</dbReference>
<dbReference type="GO" id="GO:0005634">
    <property type="term" value="C:nucleus"/>
    <property type="evidence" value="ECO:0000318"/>
    <property type="project" value="GO_Central"/>
</dbReference>
<dbReference type="GO" id="GO:0000155">
    <property type="term" value="F:phosphorelay sensor kinase activity"/>
    <property type="evidence" value="ECO:0007669"/>
    <property type="project" value="InterPro"/>
</dbReference>
<dbReference type="GO" id="GO:0009881">
    <property type="term" value="F:photoreceptor activity"/>
    <property type="evidence" value="ECO:0007669"/>
    <property type="project" value="UniProtKB-KW"/>
</dbReference>
<dbReference type="GO" id="GO:0042803">
    <property type="term" value="F:protein homodimerization activity"/>
    <property type="evidence" value="ECO:0007669"/>
    <property type="project" value="InterPro"/>
</dbReference>
<dbReference type="GO" id="GO:0009584">
    <property type="term" value="P:detection of visible light"/>
    <property type="evidence" value="ECO:0007669"/>
    <property type="project" value="InterPro"/>
</dbReference>
<dbReference type="GO" id="GO:0017009">
    <property type="term" value="P:protein-phycocyanobilin linkage"/>
    <property type="evidence" value="ECO:0000314"/>
    <property type="project" value="UniProtKB"/>
</dbReference>
<dbReference type="GO" id="GO:0009585">
    <property type="term" value="P:red, far-red light phototransduction"/>
    <property type="evidence" value="ECO:0007669"/>
    <property type="project" value="UniProtKB-KW"/>
</dbReference>
<dbReference type="GO" id="GO:0006355">
    <property type="term" value="P:regulation of DNA-templated transcription"/>
    <property type="evidence" value="ECO:0007669"/>
    <property type="project" value="InterPro"/>
</dbReference>
<dbReference type="CDD" id="cd16932">
    <property type="entry name" value="HATPase_Phy-like"/>
    <property type="match status" value="1"/>
</dbReference>
<dbReference type="CDD" id="cd00082">
    <property type="entry name" value="HisKA"/>
    <property type="match status" value="1"/>
</dbReference>
<dbReference type="CDD" id="cd00130">
    <property type="entry name" value="PAS"/>
    <property type="match status" value="2"/>
</dbReference>
<dbReference type="FunFam" id="1.10.287.130:FF:000029">
    <property type="entry name" value="Phytochrome"/>
    <property type="match status" value="1"/>
</dbReference>
<dbReference type="FunFam" id="3.30.450.20:FF:000034">
    <property type="entry name" value="Phytochrome"/>
    <property type="match status" value="1"/>
</dbReference>
<dbReference type="FunFam" id="3.30.450.20:FF:000039">
    <property type="entry name" value="Phytochrome"/>
    <property type="match status" value="1"/>
</dbReference>
<dbReference type="FunFam" id="3.30.450.270:FF:000001">
    <property type="entry name" value="Phytochrome"/>
    <property type="match status" value="1"/>
</dbReference>
<dbReference type="FunFam" id="3.30.565.10:FF:000044">
    <property type="entry name" value="Phytochrome"/>
    <property type="match status" value="1"/>
</dbReference>
<dbReference type="Gene3D" id="1.10.287.130">
    <property type="match status" value="1"/>
</dbReference>
<dbReference type="Gene3D" id="3.30.450.270">
    <property type="match status" value="1"/>
</dbReference>
<dbReference type="Gene3D" id="3.30.450.40">
    <property type="match status" value="1"/>
</dbReference>
<dbReference type="Gene3D" id="3.30.565.10">
    <property type="entry name" value="Histidine kinase-like ATPase, C-terminal domain"/>
    <property type="match status" value="1"/>
</dbReference>
<dbReference type="Gene3D" id="3.30.450.20">
    <property type="entry name" value="PAS domain"/>
    <property type="match status" value="3"/>
</dbReference>
<dbReference type="InterPro" id="IPR003018">
    <property type="entry name" value="GAF"/>
</dbReference>
<dbReference type="InterPro" id="IPR029016">
    <property type="entry name" value="GAF-like_dom_sf"/>
</dbReference>
<dbReference type="InterPro" id="IPR036890">
    <property type="entry name" value="HATPase_C_sf"/>
</dbReference>
<dbReference type="InterPro" id="IPR005467">
    <property type="entry name" value="His_kinase_dom"/>
</dbReference>
<dbReference type="InterPro" id="IPR003661">
    <property type="entry name" value="HisK_dim/P_dom"/>
</dbReference>
<dbReference type="InterPro" id="IPR000014">
    <property type="entry name" value="PAS"/>
</dbReference>
<dbReference type="InterPro" id="IPR035965">
    <property type="entry name" value="PAS-like_dom_sf"/>
</dbReference>
<dbReference type="InterPro" id="IPR013654">
    <property type="entry name" value="PAS_2"/>
</dbReference>
<dbReference type="InterPro" id="IPR013767">
    <property type="entry name" value="PAS_fold"/>
</dbReference>
<dbReference type="InterPro" id="IPR044767">
    <property type="entry name" value="Phy_HATPase-like"/>
</dbReference>
<dbReference type="InterPro" id="IPR016132">
    <property type="entry name" value="Phyto_chromo_attachment"/>
</dbReference>
<dbReference type="InterPro" id="IPR013516">
    <property type="entry name" value="Phyto_chromo_BS"/>
</dbReference>
<dbReference type="InterPro" id="IPR001294">
    <property type="entry name" value="Phytochrome"/>
</dbReference>
<dbReference type="InterPro" id="IPR012129">
    <property type="entry name" value="Phytochrome_A-E"/>
</dbReference>
<dbReference type="InterPro" id="IPR013515">
    <property type="entry name" value="Phytochrome_cen-reg"/>
</dbReference>
<dbReference type="InterPro" id="IPR043150">
    <property type="entry name" value="Phytochrome_PHY_sf"/>
</dbReference>
<dbReference type="NCBIfam" id="TIGR00229">
    <property type="entry name" value="sensory_box"/>
    <property type="match status" value="1"/>
</dbReference>
<dbReference type="PANTHER" id="PTHR47876">
    <property type="entry name" value="OS08G0260000 PROTEIN"/>
    <property type="match status" value="1"/>
</dbReference>
<dbReference type="PANTHER" id="PTHR47876:SF3">
    <property type="entry name" value="PHYTOCHROME 1"/>
    <property type="match status" value="1"/>
</dbReference>
<dbReference type="Pfam" id="PF01590">
    <property type="entry name" value="GAF"/>
    <property type="match status" value="1"/>
</dbReference>
<dbReference type="Pfam" id="PF02518">
    <property type="entry name" value="HATPase_c"/>
    <property type="match status" value="1"/>
</dbReference>
<dbReference type="Pfam" id="PF00512">
    <property type="entry name" value="HisKA"/>
    <property type="match status" value="1"/>
</dbReference>
<dbReference type="Pfam" id="PF00989">
    <property type="entry name" value="PAS"/>
    <property type="match status" value="2"/>
</dbReference>
<dbReference type="Pfam" id="PF08446">
    <property type="entry name" value="PAS_2"/>
    <property type="match status" value="1"/>
</dbReference>
<dbReference type="Pfam" id="PF00360">
    <property type="entry name" value="PHY"/>
    <property type="match status" value="1"/>
</dbReference>
<dbReference type="PIRSF" id="PIRSF000084">
    <property type="entry name" value="Phytochrome"/>
    <property type="match status" value="1"/>
</dbReference>
<dbReference type="PRINTS" id="PR01033">
    <property type="entry name" value="PHYTOCHROME"/>
</dbReference>
<dbReference type="SMART" id="SM00065">
    <property type="entry name" value="GAF"/>
    <property type="match status" value="1"/>
</dbReference>
<dbReference type="SMART" id="SM00387">
    <property type="entry name" value="HATPase_c"/>
    <property type="match status" value="1"/>
</dbReference>
<dbReference type="SMART" id="SM00388">
    <property type="entry name" value="HisKA"/>
    <property type="match status" value="1"/>
</dbReference>
<dbReference type="SMART" id="SM00091">
    <property type="entry name" value="PAS"/>
    <property type="match status" value="3"/>
</dbReference>
<dbReference type="SUPFAM" id="SSF55874">
    <property type="entry name" value="ATPase domain of HSP90 chaperone/DNA topoisomerase II/histidine kinase"/>
    <property type="match status" value="1"/>
</dbReference>
<dbReference type="SUPFAM" id="SSF55781">
    <property type="entry name" value="GAF domain-like"/>
    <property type="match status" value="2"/>
</dbReference>
<dbReference type="SUPFAM" id="SSF55785">
    <property type="entry name" value="PYP-like sensor domain (PAS domain)"/>
    <property type="match status" value="3"/>
</dbReference>
<dbReference type="PROSITE" id="PS50109">
    <property type="entry name" value="HIS_KIN"/>
    <property type="match status" value="1"/>
</dbReference>
<dbReference type="PROSITE" id="PS50112">
    <property type="entry name" value="PAS"/>
    <property type="match status" value="2"/>
</dbReference>
<dbReference type="PROSITE" id="PS00245">
    <property type="entry name" value="PHYTOCHROME_1"/>
    <property type="match status" value="1"/>
</dbReference>
<dbReference type="PROSITE" id="PS50046">
    <property type="entry name" value="PHYTOCHROME_2"/>
    <property type="match status" value="1"/>
</dbReference>
<reference key="1">
    <citation type="journal article" date="2010" name="Nature">
        <title>Genome sequence of the palaeopolyploid soybean.</title>
        <authorList>
            <person name="Schmutz J."/>
            <person name="Cannon S.B."/>
            <person name="Schlueter J."/>
            <person name="Ma J."/>
            <person name="Mitros T."/>
            <person name="Nelson W."/>
            <person name="Hyten D.L."/>
            <person name="Song Q."/>
            <person name="Thelen J.J."/>
            <person name="Cheng J."/>
            <person name="Xu D."/>
            <person name="Hellsten U."/>
            <person name="May G.D."/>
            <person name="Yu Y."/>
            <person name="Sakurai T."/>
            <person name="Umezawa T."/>
            <person name="Bhattacharyya M.K."/>
            <person name="Sandhu D."/>
            <person name="Valliyodan B."/>
            <person name="Lindquist E."/>
            <person name="Peto M."/>
            <person name="Grant D."/>
            <person name="Shu S."/>
            <person name="Goodstein D."/>
            <person name="Barry K."/>
            <person name="Futrell-Griggs M."/>
            <person name="Abernathy B."/>
            <person name="Du J."/>
            <person name="Tian Z."/>
            <person name="Zhu L."/>
            <person name="Gill N."/>
            <person name="Joshi T."/>
            <person name="Libault M."/>
            <person name="Sethuraman A."/>
            <person name="Zhang X.-C."/>
            <person name="Shinozaki K."/>
            <person name="Nguyen H.T."/>
            <person name="Wing R.A."/>
            <person name="Cregan P."/>
            <person name="Specht J."/>
            <person name="Grimwood J."/>
            <person name="Rokhsar D."/>
            <person name="Stacey G."/>
            <person name="Shoemaker R.C."/>
            <person name="Jackson S.A."/>
        </authorList>
    </citation>
    <scope>NUCLEOTIDE SEQUENCE [LARGE SCALE GENOMIC DNA]</scope>
    <source>
        <strain>cv. Williams 82</strain>
    </source>
</reference>
<reference key="2">
    <citation type="journal article" date="2020" name="Nat. Plants">
        <title>Structural insights into photoactivation and signalling in plant phytochromes.</title>
        <authorList>
            <person name="Nagano S."/>
            <person name="Guan K."/>
            <person name="Shenkutie S.M."/>
            <person name="Feiler C."/>
            <person name="Weiss M."/>
            <person name="Kraskov A."/>
            <person name="Buhrke D."/>
            <person name="Hildebrandt P."/>
            <person name="Hughes J."/>
        </authorList>
    </citation>
    <scope>X-RAY CRYSTALLOGRAPHY (2.90 ANGSTROMS) OF 85-616 IN COMPLEX WITH PHYCOCYANOBILIN</scope>
    <scope>SUBUNIT</scope>
</reference>
<feature type="chain" id="PRO_0000451872" description="Phytochrome B-2">
    <location>
        <begin position="1"/>
        <end position="1149"/>
    </location>
</feature>
<feature type="domain" description="GAF" evidence="6">
    <location>
        <begin position="267"/>
        <end position="449"/>
    </location>
</feature>
<feature type="domain" description="PAS 1" evidence="3">
    <location>
        <begin position="641"/>
        <end position="712"/>
    </location>
</feature>
<feature type="domain" description="PAS 2" evidence="3">
    <location>
        <begin position="775"/>
        <end position="846"/>
    </location>
</feature>
<feature type="domain" description="Histidine kinase" evidence="2">
    <location>
        <begin position="923"/>
        <end position="1143"/>
    </location>
</feature>
<feature type="region of interest" description="Disordered" evidence="4">
    <location>
        <begin position="1"/>
        <end position="48"/>
    </location>
</feature>
<feature type="compositionally biased region" description="Pro residues" evidence="4">
    <location>
        <begin position="13"/>
        <end position="24"/>
    </location>
</feature>
<feature type="compositionally biased region" description="Basic residues" evidence="4">
    <location>
        <begin position="28"/>
        <end position="38"/>
    </location>
</feature>
<feature type="binding site" description="covalent" evidence="7">
    <location>
        <position position="353"/>
    </location>
    <ligand>
        <name>phytochromobilin</name>
        <dbReference type="ChEBI" id="CHEBI:189064"/>
    </ligand>
</feature>
<feature type="helix" evidence="9">
    <location>
        <begin position="99"/>
        <end position="103"/>
    </location>
</feature>
<feature type="strand" evidence="9">
    <location>
        <begin position="112"/>
        <end position="117"/>
    </location>
</feature>
<feature type="turn" evidence="9">
    <location>
        <begin position="119"/>
        <end position="121"/>
    </location>
</feature>
<feature type="strand" evidence="9">
    <location>
        <begin position="123"/>
        <end position="126"/>
    </location>
</feature>
<feature type="helix" evidence="9">
    <location>
        <begin position="131"/>
        <end position="135"/>
    </location>
</feature>
<feature type="helix" evidence="9">
    <location>
        <begin position="160"/>
        <end position="162"/>
    </location>
</feature>
<feature type="helix" evidence="9">
    <location>
        <begin position="165"/>
        <end position="175"/>
    </location>
</feature>
<feature type="helix" evidence="9">
    <location>
        <begin position="180"/>
        <end position="182"/>
    </location>
</feature>
<feature type="strand" evidence="9">
    <location>
        <begin position="185"/>
        <end position="190"/>
    </location>
</feature>
<feature type="turn" evidence="9">
    <location>
        <begin position="191"/>
        <end position="193"/>
    </location>
</feature>
<feature type="strand" evidence="9">
    <location>
        <begin position="196"/>
        <end position="203"/>
    </location>
</feature>
<feature type="strand" evidence="9">
    <location>
        <begin position="205"/>
        <end position="214"/>
    </location>
</feature>
<feature type="helix" evidence="9">
    <location>
        <begin position="224"/>
        <end position="242"/>
    </location>
</feature>
<feature type="helix" evidence="9">
    <location>
        <begin position="249"/>
        <end position="264"/>
    </location>
</feature>
<feature type="strand" evidence="9">
    <location>
        <begin position="267"/>
        <end position="274"/>
    </location>
</feature>
<feature type="strand" evidence="9">
    <location>
        <begin position="280"/>
        <end position="287"/>
    </location>
</feature>
<feature type="strand" evidence="9">
    <location>
        <begin position="297"/>
        <end position="299"/>
    </location>
</feature>
<feature type="helix" evidence="9">
    <location>
        <begin position="306"/>
        <end position="312"/>
    </location>
</feature>
<feature type="strand" evidence="9">
    <location>
        <begin position="317"/>
        <end position="321"/>
    </location>
</feature>
<feature type="strand" evidence="9">
    <location>
        <begin position="328"/>
        <end position="330"/>
    </location>
</feature>
<feature type="strand" evidence="9">
    <location>
        <begin position="336"/>
        <end position="339"/>
    </location>
</feature>
<feature type="helix" evidence="9">
    <location>
        <begin position="352"/>
        <end position="361"/>
    </location>
</feature>
<feature type="strand" evidence="9">
    <location>
        <begin position="364"/>
        <end position="374"/>
    </location>
</feature>
<feature type="strand" evidence="9">
    <location>
        <begin position="387"/>
        <end position="399"/>
    </location>
</feature>
<feature type="helix" evidence="9">
    <location>
        <begin position="405"/>
        <end position="448"/>
    </location>
</feature>
<feature type="strand" evidence="9">
    <location>
        <begin position="450"/>
        <end position="452"/>
    </location>
</feature>
<feature type="helix" evidence="9">
    <location>
        <begin position="455"/>
        <end position="458"/>
    </location>
</feature>
<feature type="strand" evidence="9">
    <location>
        <begin position="459"/>
        <end position="461"/>
    </location>
</feature>
<feature type="turn" evidence="9">
    <location>
        <begin position="463"/>
        <end position="466"/>
    </location>
</feature>
<feature type="strand" evidence="9">
    <location>
        <begin position="470"/>
        <end position="476"/>
    </location>
</feature>
<feature type="strand" evidence="9">
    <location>
        <begin position="479"/>
        <end position="485"/>
    </location>
</feature>
<feature type="helix" evidence="9">
    <location>
        <begin position="489"/>
        <end position="502"/>
    </location>
</feature>
<feature type="strand" evidence="9">
    <location>
        <begin position="504"/>
        <end position="507"/>
    </location>
</feature>
<feature type="strand" evidence="9">
    <location>
        <begin position="509"/>
        <end position="512"/>
    </location>
</feature>
<feature type="helix" evidence="9">
    <location>
        <begin position="514"/>
        <end position="517"/>
    </location>
</feature>
<feature type="turn" evidence="9">
    <location>
        <begin position="522"/>
        <end position="525"/>
    </location>
</feature>
<feature type="strand" evidence="9">
    <location>
        <begin position="527"/>
        <end position="529"/>
    </location>
</feature>
<feature type="strand" evidence="9">
    <location>
        <begin position="531"/>
        <end position="538"/>
    </location>
</feature>
<feature type="strand" evidence="9">
    <location>
        <begin position="541"/>
        <end position="547"/>
    </location>
</feature>
<feature type="strand" evidence="9">
    <location>
        <begin position="552"/>
        <end position="559"/>
    </location>
</feature>
<feature type="strand" evidence="9">
    <location>
        <begin position="580"/>
        <end position="585"/>
    </location>
</feature>
<feature type="helix" evidence="9">
    <location>
        <begin position="594"/>
        <end position="616"/>
    </location>
</feature>
<protein>
    <recommendedName>
        <fullName evidence="6">Phytochrome B-2</fullName>
    </recommendedName>
</protein>
<comment type="function">
    <text evidence="1">Regulatory photoreceptor which exists in two forms that are reversibly interconvertible by light: the Pr form that absorbs maximally in the red region of the spectrum and the Pfr form that absorbs maximally in the far-red region. Photoconversion of Pr to Pfr induces an array of morphogenic responses, whereas reconversion of Pfr to Pr cancels the induction of those responses. Pfr controls the expression of a number of nuclear genes including those encoding the small subunit of ribulose-bisphosphate carboxylase, chlorophyll A/B binding protein, protochlorophyllide reductase, rRNA, etc. It also controls the expression of its own gene(s) in a negative feedback fashion.</text>
</comment>
<comment type="subunit">
    <text evidence="5">Heterodimer between subunit A and subunit B.</text>
</comment>
<comment type="PTM">
    <text evidence="7">Contains one covalently linked phytochromobilin chromophore.</text>
</comment>
<comment type="similarity">
    <text evidence="6">Belongs to the phytochrome family.</text>
</comment>
<evidence type="ECO:0000250" key="1">
    <source>
        <dbReference type="UniProtKB" id="P14713"/>
    </source>
</evidence>
<evidence type="ECO:0000255" key="2">
    <source>
        <dbReference type="PROSITE-ProRule" id="PRU00107"/>
    </source>
</evidence>
<evidence type="ECO:0000255" key="3">
    <source>
        <dbReference type="PROSITE-ProRule" id="PRU00140"/>
    </source>
</evidence>
<evidence type="ECO:0000256" key="4">
    <source>
        <dbReference type="SAM" id="MobiDB-lite"/>
    </source>
</evidence>
<evidence type="ECO:0000269" key="5">
    <source>
    </source>
</evidence>
<evidence type="ECO:0000305" key="6"/>
<evidence type="ECO:0000305" key="7">
    <source>
    </source>
</evidence>
<evidence type="ECO:0000312" key="8">
    <source>
        <dbReference type="EMBL" id="KRH11936.1"/>
    </source>
</evidence>
<evidence type="ECO:0007829" key="9">
    <source>
        <dbReference type="PDB" id="6TL4"/>
    </source>
</evidence>
<name>PHYB2_SOYBN</name>
<organism>
    <name type="scientific">Glycine max</name>
    <name type="common">Soybean</name>
    <name type="synonym">Glycine hispida</name>
    <dbReference type="NCBI Taxonomy" id="3847"/>
    <lineage>
        <taxon>Eukaryota</taxon>
        <taxon>Viridiplantae</taxon>
        <taxon>Streptophyta</taxon>
        <taxon>Embryophyta</taxon>
        <taxon>Tracheophyta</taxon>
        <taxon>Spermatophyta</taxon>
        <taxon>Magnoliopsida</taxon>
        <taxon>eudicotyledons</taxon>
        <taxon>Gunneridae</taxon>
        <taxon>Pentapetalae</taxon>
        <taxon>rosids</taxon>
        <taxon>fabids</taxon>
        <taxon>Fabales</taxon>
        <taxon>Fabaceae</taxon>
        <taxon>Papilionoideae</taxon>
        <taxon>50 kb inversion clade</taxon>
        <taxon>NPAAA clade</taxon>
        <taxon>indigoferoid/millettioid clade</taxon>
        <taxon>Phaseoleae</taxon>
        <taxon>Glycine</taxon>
        <taxon>Glycine subgen. Soja</taxon>
    </lineage>
</organism>
<keyword id="KW-0002">3D-structure</keyword>
<keyword id="KW-0157">Chromophore</keyword>
<keyword id="KW-0600">Photoreceptor protein</keyword>
<keyword id="KW-0607">Phytochrome signaling pathway</keyword>
<keyword id="KW-0675">Receptor</keyword>
<keyword id="KW-1185">Reference proteome</keyword>
<keyword id="KW-0677">Repeat</keyword>
<keyword id="KW-0716">Sensory transduction</keyword>
<keyword id="KW-0804">Transcription</keyword>
<keyword id="KW-0805">Transcription regulation</keyword>